<keyword id="KW-0963">Cytoplasm</keyword>
<keyword id="KW-0238">DNA-binding</keyword>
<keyword id="KW-0677">Repeat</keyword>
<keyword id="KW-0678">Repressor</keyword>
<keyword id="KW-0804">Transcription</keyword>
<keyword id="KW-0805">Transcription regulation</keyword>
<accession>B7LWG9</accession>
<proteinExistence type="inferred from homology"/>
<evidence type="ECO:0000255" key="1">
    <source>
        <dbReference type="HAMAP-Rule" id="MF_01008"/>
    </source>
</evidence>
<evidence type="ECO:0000255" key="2">
    <source>
        <dbReference type="PROSITE-ProRule" id="PRU01076"/>
    </source>
</evidence>
<comment type="function">
    <text evidence="1">Negatively regulates its own expression and that of the subsequent genes in the proximal part of the division and cell wall (dcw) gene cluster. Acts by binding directly to DNA. May also regulate the expression of genes outside the dcw cluster.</text>
</comment>
<comment type="subunit">
    <text evidence="1">Forms oligomers.</text>
</comment>
<comment type="subcellular location">
    <subcellularLocation>
        <location evidence="1">Cytoplasm</location>
        <location evidence="1">Nucleoid</location>
    </subcellularLocation>
</comment>
<comment type="similarity">
    <text evidence="1">Belongs to the MraZ family.</text>
</comment>
<dbReference type="EMBL" id="CU928158">
    <property type="protein sequence ID" value="CAQ87686.1"/>
    <property type="molecule type" value="Genomic_DNA"/>
</dbReference>
<dbReference type="RefSeq" id="WP_000488287.1">
    <property type="nucleotide sequence ID" value="NC_011740.1"/>
</dbReference>
<dbReference type="SMR" id="B7LWG9"/>
<dbReference type="GeneID" id="75058811"/>
<dbReference type="KEGG" id="efe:EFER_0103"/>
<dbReference type="HOGENOM" id="CLU_107907_2_0_6"/>
<dbReference type="OrthoDB" id="9807753at2"/>
<dbReference type="Proteomes" id="UP000000745">
    <property type="component" value="Chromosome"/>
</dbReference>
<dbReference type="GO" id="GO:0005737">
    <property type="term" value="C:cytoplasm"/>
    <property type="evidence" value="ECO:0007669"/>
    <property type="project" value="UniProtKB-UniRule"/>
</dbReference>
<dbReference type="GO" id="GO:0009295">
    <property type="term" value="C:nucleoid"/>
    <property type="evidence" value="ECO:0007669"/>
    <property type="project" value="UniProtKB-SubCell"/>
</dbReference>
<dbReference type="GO" id="GO:0003700">
    <property type="term" value="F:DNA-binding transcription factor activity"/>
    <property type="evidence" value="ECO:0007669"/>
    <property type="project" value="UniProtKB-UniRule"/>
</dbReference>
<dbReference type="GO" id="GO:0000976">
    <property type="term" value="F:transcription cis-regulatory region binding"/>
    <property type="evidence" value="ECO:0007669"/>
    <property type="project" value="TreeGrafter"/>
</dbReference>
<dbReference type="GO" id="GO:2000143">
    <property type="term" value="P:negative regulation of DNA-templated transcription initiation"/>
    <property type="evidence" value="ECO:0007669"/>
    <property type="project" value="TreeGrafter"/>
</dbReference>
<dbReference type="CDD" id="cd16321">
    <property type="entry name" value="MraZ_C"/>
    <property type="match status" value="1"/>
</dbReference>
<dbReference type="CDD" id="cd16320">
    <property type="entry name" value="MraZ_N"/>
    <property type="match status" value="1"/>
</dbReference>
<dbReference type="FunFam" id="3.40.1550.20:FF:000001">
    <property type="entry name" value="Transcriptional regulator MraZ"/>
    <property type="match status" value="1"/>
</dbReference>
<dbReference type="Gene3D" id="3.40.1550.20">
    <property type="entry name" value="Transcriptional regulator MraZ domain"/>
    <property type="match status" value="1"/>
</dbReference>
<dbReference type="HAMAP" id="MF_01008">
    <property type="entry name" value="MraZ"/>
    <property type="match status" value="1"/>
</dbReference>
<dbReference type="InterPro" id="IPR003444">
    <property type="entry name" value="MraZ"/>
</dbReference>
<dbReference type="InterPro" id="IPR035644">
    <property type="entry name" value="MraZ_C"/>
</dbReference>
<dbReference type="InterPro" id="IPR020603">
    <property type="entry name" value="MraZ_dom"/>
</dbReference>
<dbReference type="InterPro" id="IPR035642">
    <property type="entry name" value="MraZ_N"/>
</dbReference>
<dbReference type="InterPro" id="IPR038619">
    <property type="entry name" value="MraZ_sf"/>
</dbReference>
<dbReference type="InterPro" id="IPR007159">
    <property type="entry name" value="SpoVT-AbrB_dom"/>
</dbReference>
<dbReference type="InterPro" id="IPR037914">
    <property type="entry name" value="SpoVT-AbrB_sf"/>
</dbReference>
<dbReference type="NCBIfam" id="TIGR00242">
    <property type="entry name" value="division/cell wall cluster transcriptional repressor MraZ"/>
    <property type="match status" value="1"/>
</dbReference>
<dbReference type="PANTHER" id="PTHR34701">
    <property type="entry name" value="TRANSCRIPTIONAL REGULATOR MRAZ"/>
    <property type="match status" value="1"/>
</dbReference>
<dbReference type="PANTHER" id="PTHR34701:SF1">
    <property type="entry name" value="TRANSCRIPTIONAL REGULATOR MRAZ"/>
    <property type="match status" value="1"/>
</dbReference>
<dbReference type="Pfam" id="PF02381">
    <property type="entry name" value="MraZ"/>
    <property type="match status" value="2"/>
</dbReference>
<dbReference type="SUPFAM" id="SSF89447">
    <property type="entry name" value="AbrB/MazE/MraZ-like"/>
    <property type="match status" value="1"/>
</dbReference>
<dbReference type="PROSITE" id="PS51740">
    <property type="entry name" value="SPOVT_ABRB"/>
    <property type="match status" value="2"/>
</dbReference>
<organism>
    <name type="scientific">Escherichia fergusonii (strain ATCC 35469 / DSM 13698 / CCUG 18766 / IAM 14443 / JCM 21226 / LMG 7866 / NBRC 102419 / NCTC 12128 / CDC 0568-73)</name>
    <dbReference type="NCBI Taxonomy" id="585054"/>
    <lineage>
        <taxon>Bacteria</taxon>
        <taxon>Pseudomonadati</taxon>
        <taxon>Pseudomonadota</taxon>
        <taxon>Gammaproteobacteria</taxon>
        <taxon>Enterobacterales</taxon>
        <taxon>Enterobacteriaceae</taxon>
        <taxon>Escherichia</taxon>
    </lineage>
</organism>
<gene>
    <name evidence="1" type="primary">mraZ</name>
    <name type="ordered locus">EFER_0103</name>
</gene>
<name>MRAZ_ESCF3</name>
<reference key="1">
    <citation type="journal article" date="2009" name="PLoS Genet.">
        <title>Organised genome dynamics in the Escherichia coli species results in highly diverse adaptive paths.</title>
        <authorList>
            <person name="Touchon M."/>
            <person name="Hoede C."/>
            <person name="Tenaillon O."/>
            <person name="Barbe V."/>
            <person name="Baeriswyl S."/>
            <person name="Bidet P."/>
            <person name="Bingen E."/>
            <person name="Bonacorsi S."/>
            <person name="Bouchier C."/>
            <person name="Bouvet O."/>
            <person name="Calteau A."/>
            <person name="Chiapello H."/>
            <person name="Clermont O."/>
            <person name="Cruveiller S."/>
            <person name="Danchin A."/>
            <person name="Diard M."/>
            <person name="Dossat C."/>
            <person name="Karoui M.E."/>
            <person name="Frapy E."/>
            <person name="Garry L."/>
            <person name="Ghigo J.M."/>
            <person name="Gilles A.M."/>
            <person name="Johnson J."/>
            <person name="Le Bouguenec C."/>
            <person name="Lescat M."/>
            <person name="Mangenot S."/>
            <person name="Martinez-Jehanne V."/>
            <person name="Matic I."/>
            <person name="Nassif X."/>
            <person name="Oztas S."/>
            <person name="Petit M.A."/>
            <person name="Pichon C."/>
            <person name="Rouy Z."/>
            <person name="Ruf C.S."/>
            <person name="Schneider D."/>
            <person name="Tourret J."/>
            <person name="Vacherie B."/>
            <person name="Vallenet D."/>
            <person name="Medigue C."/>
            <person name="Rocha E.P.C."/>
            <person name="Denamur E."/>
        </authorList>
    </citation>
    <scope>NUCLEOTIDE SEQUENCE [LARGE SCALE GENOMIC DNA]</scope>
    <source>
        <strain>ATCC 35469 / DSM 13698 / BCRC 15582 / CCUG 18766 / IAM 14443 / JCM 21226 / LMG 7866 / NBRC 102419 / NCTC 12128 / CDC 0568-73</strain>
    </source>
</reference>
<protein>
    <recommendedName>
        <fullName>Transcriptional regulator MraZ</fullName>
    </recommendedName>
</protein>
<feature type="chain" id="PRO_1000134798" description="Transcriptional regulator MraZ">
    <location>
        <begin position="1"/>
        <end position="152"/>
    </location>
</feature>
<feature type="domain" description="SpoVT-AbrB 1" evidence="2">
    <location>
        <begin position="5"/>
        <end position="52"/>
    </location>
</feature>
<feature type="domain" description="SpoVT-AbrB 2" evidence="2">
    <location>
        <begin position="81"/>
        <end position="124"/>
    </location>
</feature>
<sequence>MFRGATLVNLDSKGRLSVPTRYREELLGNAAGQMVCTIDIHHPCLLLYPLPEWEIIEHKLSRLSSMNPVERRVQRLLLGHASECQLDNAGRLLIAPVLRQHAGLTKEVMLVGQFNKFELWDETTWHQQVREDIDAEQSITENLSERLQDLSL</sequence>